<accession>Q06895</accession>
<reference key="1">
    <citation type="journal article" date="1993" name="J. Gen. Virol.">
        <title>A new serotype of the outer capsid protein VP4 shared by an unusual human rotavirus strain Ro1845 and canine rotaviruses.</title>
        <authorList>
            <person name="Isegawa Y."/>
            <person name="Nakagomi O."/>
            <person name="Hoshino Y."/>
            <person name="Aboudy Y."/>
            <person name="Shif I."/>
            <person name="Silberstein I."/>
            <person name="Nakagomi T."/>
            <person name="Ueda S."/>
            <person name="Sears J."/>
            <person name="Flores J."/>
        </authorList>
    </citation>
    <scope>NUCLEOTIDE SEQUENCE [MRNA]</scope>
</reference>
<sequence>MASLIYRQLLTNSYTVNLSDEIQEIGSTKTQNTTINPGPFAQTGYAPVNWGPGETNDSTTIEPVLDGPYQPTSFNPPVGYWMLLSPTTAGVIVEGTNNTDRWLATILIEPNVTSQQRTYTIFGVQEQITIENTSQTQWRFVDVSKTTQNGSYSQYGPLLSTPKLYAVMKYGGRIHTYSGQTPNATTGYYSATNYDSVNMTTFCDFYIIPRSEESKCTEYINNGLPPIQNTRNIVPLALSARNVIPLKAQSNEDIVVSKTSLWKEMQYNRDITIRFKFANSIVKSGGLGYKWSEISFKPANYQYTYMRDGEEVTAHTTCSVNGMNDFSFNGGSLPTDFVISRYEVIKENSYVYIDYWDDSQAFRNMVYVRSLAANLNSVTCAGGDYNFALPVGQWPYMTGGAVSLHSAGVTLSTQFTDFVSLNSLRFRFRLAVEEPSFAIMRTRVSGLYGLPAANPNNGREYYEIAGRFSLISLVPSNDNYQTPIANSVTVRQDLERQLGELREEFNALSQEIAMSQLIDLALLPLDMFSMFSGIKSTIDAAKSIATNVMKKFKRSSLASSVSTLTDSLSDAASSVSRGSSIRSVGSSVSAWTDVSIQITDVSSSVSSISTQTSTISRRLRLKEMATQTEGMNFDDISAAVLKTKIDKSIQISPTTLPDIVTEASEKFIPNRAYRVINNDEVFEAGTDGRFFAYRVDTFEEIPFDVQKFADLVTDSPVISAIIDFKTLKNLNDNYGIGKQQAFNLLRSDPRVLREFINQNNPIIRNRIEQLIMQCRL</sequence>
<keyword id="KW-0167">Capsid protein</keyword>
<keyword id="KW-0175">Coiled coil</keyword>
<keyword id="KW-1015">Disulfide bond</keyword>
<keyword id="KW-0348">Hemagglutinin</keyword>
<keyword id="KW-1032">Host cell membrane</keyword>
<keyword id="KW-1035">Host cytoplasm</keyword>
<keyword id="KW-1037">Host cytoskeleton</keyword>
<keyword id="KW-1038">Host endoplasmic reticulum</keyword>
<keyword id="KW-1043">Host membrane</keyword>
<keyword id="KW-0945">Host-virus interaction</keyword>
<keyword id="KW-0472">Membrane</keyword>
<keyword id="KW-1152">Outer capsid protein</keyword>
<keyword id="KW-1161">Viral attachment to host cell</keyword>
<keyword id="KW-1162">Viral penetration into host cytoplasm</keyword>
<keyword id="KW-1173">Viral penetration via permeabilization of host membrane</keyword>
<keyword id="KW-0946">Virion</keyword>
<keyword id="KW-1160">Virus entry into host cell</keyword>
<comment type="function">
    <molecule>Outer capsid protein VP4</molecule>
    <text evidence="1">Spike-forming protein that mediates virion attachment to the host epithelial cell receptors and plays a major role in cell penetration, determination of host range restriction and virulence. Rotavirus attachment and entry into the host cell probably involves multiple sequential contacts between the outer capsid proteins VP4 and VP7, and the cell receptors. It is subsequently lost, together with VP7, following virus entry into the host cell. Following entry into the host cell, low intracellular or intravesicular Ca(2+) concentration probably causes the calcium-stabilized VP7 trimers to dissociate from the virion. This step is probably necessary for the membrane-disrupting entry step and the release of VP4, which is locked onto the virion by VP7. During the virus exit from the host cell, VP4 seems to be required to target the newly formed virions to the host cell lipid rafts.</text>
</comment>
<comment type="function">
    <molecule>Outer capsid protein VP5*</molecule>
    <text evidence="1">Forms the spike 'foot' and 'body' and acts as a membrane permeabilization protein that mediates release of viral particles from endosomal compartments into the cytoplasm. During entry, the part of VP5* that protrudes from the virus folds back on itself and reorganizes from a local dimer to a trimer. This reorganization may be linked to membrane penetration by exposing VP5* hydrophobic region. In integrin-dependent strains, VP5* targets the integrin heterodimer ITGA2/ITGB1 for cell attachment.</text>
</comment>
<comment type="function">
    <molecule>Outer capsid protein VP8*</molecule>
    <text evidence="1">Forms the head of the spikes and mediates the recognition of specific host cell surface glycans. It is the viral hemagglutinin and an important target of neutralizing antibodies. In sialic acid-dependent strains, VP8* binds to host cell sialic acid, most probably a ganglioside, providing the initial contact. In some other strains, VP8* mediates the attachment to histo-blood group antigens (HBGAs) for viral entry.</text>
</comment>
<comment type="subunit">
    <molecule>Outer capsid protein VP4</molecule>
    <text evidence="1">Homotrimer. VP4 adopts a dimeric appearance above the capsid surface, while forming a trimeric base anchored inside the capsid layer. Only hints of the third molecule are observed above the capsid surface. It probably performs a series of molecular rearrangements during viral entry. Prior to trypsin cleavage, it is flexible. The priming trypsin cleavage triggers its rearrangement into rigid spikes with approximate two-fold symmetry of their protruding parts. After an unknown second triggering event, cleaved VP4 may undergo another rearrangement, in which two VP5* subunits fold back on themselves and join a third subunit to form a tightly associated trimer, shaped like a folded umbrella. Interacts with VP6. Interacts with VP7.</text>
</comment>
<comment type="subunit">
    <molecule>Outer capsid protein VP5*</molecule>
    <text evidence="1">Homotrimer. The trimer is coiled-coil stabilized by its C-terminus, however, its N-terminus, known as antigen domain or 'body', seems to be flexible allowing it to self-associate either as a dimer or a trimer.</text>
</comment>
<comment type="subcellular location">
    <molecule>Outer capsid protein VP4</molecule>
    <subcellularLocation>
        <location evidence="1">Virion</location>
    </subcellularLocation>
    <subcellularLocation>
        <location evidence="1">Host rough endoplasmic reticulum</location>
    </subcellularLocation>
    <subcellularLocation>
        <location evidence="1">Host cell membrane</location>
    </subcellularLocation>
    <subcellularLocation>
        <location evidence="1">Host cytoplasm</location>
        <location evidence="1">Host cytoskeleton</location>
    </subcellularLocation>
    <subcellularLocation>
        <location evidence="1">Host endoplasmic reticulum-Golgi intermediate compartment</location>
    </subcellularLocation>
    <text evidence="1">The outer layer contains 180 copies of VP4, grouped as 60 dimers. Immature double-layered particles assembled in the cytoplasm bud across the membrane of the endoplasmic reticulum, acquiring during this process a transient lipid membrane that is modified with the ER resident viral glycoproteins NSP4 and VP7; these enveloped particles also contain VP4. As the particles move towards the interior of the ER cisternae, the transient lipid membrane and the non-structural protein NSP4 are lost, while the virus surface proteins VP4 and VP7 rearrange to form the outermost virus protein layer, yielding mature infectious triple-layered particles. VP4 also seems to associate with lipid rafts of the host cell membrane probably for the exit of the virus from the infected cell by an alternate pathway.</text>
</comment>
<comment type="subcellular location">
    <molecule>Outer capsid protein VP8*</molecule>
    <subcellularLocation>
        <location evidence="1">Virion</location>
    </subcellularLocation>
    <text evidence="1">Outer capsid protein.</text>
</comment>
<comment type="subcellular location">
    <molecule>Outer capsid protein VP5*</molecule>
    <subcellularLocation>
        <location evidence="1">Virion</location>
    </subcellularLocation>
    <text evidence="1">Outer capsid protein.</text>
</comment>
<comment type="domain">
    <molecule>Outer capsid protein VP4</molecule>
    <text evidence="1">The VP4 spike is divided into a foot, a stalk and body, and a head.</text>
</comment>
<comment type="PTM">
    <molecule>Outer capsid protein VP4</molecule>
    <text evidence="1">Proteolytic cleavage by trypsin results in activation of VP4 functions and greatly increases infectivity. The penetration into the host cell is dependent on trypsin treatment of VP4. It produces two peptides, VP5* and VP8* that remain associated with the virion. Cleavage of VP4 by trypsin probably occurs in vivo in the lumen of the intestine prior to infection of enterocytes. Trypsin seems to be incorporated into the three-layered viral particles but remains inactive as long as the viral outer capsid is intact and would only be activated upon the solubilization of the latter.</text>
</comment>
<comment type="miscellaneous">
    <text evidence="1">In group A rotaviruses, VP4 defines the P serotype.</text>
</comment>
<comment type="miscellaneous">
    <text evidence="1">Some rotavirus strains are neuraminidase-sensitive and require sialic acid to attach to the cell surface. Some rotavirus strains are integrin-dependent. Some rotavirus strains depend on ganglioside for their entry into the host cell. Hsp70 also seems to be involved in the entry of some strains.</text>
</comment>
<comment type="miscellaneous">
    <text evidence="1">This strain probably uses sialic acid to attach to the host cell.</text>
</comment>
<comment type="similarity">
    <text evidence="1">Belongs to the rotavirus VP4 family.</text>
</comment>
<proteinExistence type="evidence at transcript level"/>
<feature type="chain" id="PRO_0000041093" description="Outer capsid protein VP4" evidence="1">
    <location>
        <begin position="1"/>
        <end position="776"/>
    </location>
</feature>
<feature type="chain" id="PRO_0000041094" description="Outer capsid protein VP8*" evidence="1">
    <location>
        <begin position="1"/>
        <end position="231"/>
    </location>
</feature>
<feature type="chain" id="PRO_0000041095" description="Outer capsid protein VP5*" evidence="1">
    <location>
        <begin position="248"/>
        <end position="776"/>
    </location>
</feature>
<feature type="region of interest" description="Spike head" evidence="1">
    <location>
        <begin position="65"/>
        <end position="224"/>
    </location>
</feature>
<feature type="region of interest" description="Spike body and stalk (antigen domain)" evidence="1">
    <location>
        <begin position="248"/>
        <end position="479"/>
    </location>
</feature>
<feature type="region of interest" description="Hydrophobic; possible role in virus entry into host cell" evidence="1">
    <location>
        <begin position="389"/>
        <end position="409"/>
    </location>
</feature>
<feature type="region of interest" description="Spike foot" evidence="1">
    <location>
        <begin position="510"/>
        <end position="776"/>
    </location>
</feature>
<feature type="coiled-coil region" evidence="1">
    <location>
        <begin position="484"/>
        <end position="511"/>
    </location>
</feature>
<feature type="short sequence motif" description="DGE motif; interaction with ITGA2/ITGB1 heterodimer" evidence="1">
    <location>
        <begin position="308"/>
        <end position="310"/>
    </location>
</feature>
<feature type="short sequence motif" description="YGL motif; interaction with ITGA4" evidence="1">
    <location>
        <begin position="448"/>
        <end position="450"/>
    </location>
</feature>
<feature type="short sequence motif" description="KID motif; interaction with HSPA8" evidence="1">
    <location>
        <begin position="644"/>
        <end position="646"/>
    </location>
</feature>
<feature type="site" description="Binding to sialic acid" evidence="1">
    <location>
        <position position="101"/>
    </location>
</feature>
<feature type="site" description="Binding to sialic acid" evidence="1">
    <location>
        <position position="190"/>
    </location>
</feature>
<feature type="site" description="Cleavage" evidence="1">
    <location>
        <begin position="231"/>
        <end position="232"/>
    </location>
</feature>
<feature type="site" description="Cleavage" evidence="1">
    <location>
        <begin position="241"/>
        <end position="242"/>
    </location>
</feature>
<feature type="site" description="Cleavage; associated with enhancement of infectivity" evidence="1">
    <location>
        <begin position="247"/>
        <end position="248"/>
    </location>
</feature>
<feature type="disulfide bond" evidence="1">
    <location>
        <begin position="203"/>
        <end position="216"/>
    </location>
</feature>
<feature type="disulfide bond" evidence="1">
    <location>
        <begin position="318"/>
        <end position="380"/>
    </location>
</feature>
<organismHost>
    <name type="scientific">Homo sapiens</name>
    <name type="common">Human</name>
    <dbReference type="NCBI Taxonomy" id="9606"/>
</organismHost>
<organism>
    <name type="scientific">Rotavirus A (isolate RVA/Human/Israel/RO1845/1993/G3P5A[3])</name>
    <name type="common">RV-A</name>
    <dbReference type="NCBI Taxonomy" id="79694"/>
    <lineage>
        <taxon>Viruses</taxon>
        <taxon>Riboviria</taxon>
        <taxon>Orthornavirae</taxon>
        <taxon>Duplornaviricota</taxon>
        <taxon>Resentoviricetes</taxon>
        <taxon>Reovirales</taxon>
        <taxon>Sedoreoviridae</taxon>
        <taxon>Rotavirus</taxon>
        <taxon>Rotavirus A</taxon>
    </lineage>
</organism>
<protein>
    <recommendedName>
        <fullName evidence="1">Outer capsid protein VP4</fullName>
    </recommendedName>
    <alternativeName>
        <fullName evidence="1">Hemagglutinin</fullName>
    </alternativeName>
    <component>
        <recommendedName>
            <fullName evidence="1">Outer capsid protein VP8*</fullName>
        </recommendedName>
    </component>
    <component>
        <recommendedName>
            <fullName evidence="1">Outer capsid protein VP5*</fullName>
        </recommendedName>
    </component>
</protein>
<name>VP4_ROTHY</name>
<dbReference type="EMBL" id="D14726">
    <property type="protein sequence ID" value="BAA03546.1"/>
    <property type="molecule type" value="mRNA"/>
</dbReference>
<dbReference type="SMR" id="Q06895"/>
<dbReference type="Proteomes" id="UP000171829">
    <property type="component" value="Genome"/>
</dbReference>
<dbReference type="GO" id="GO:0044172">
    <property type="term" value="C:host cell endoplasmic reticulum-Golgi intermediate compartment"/>
    <property type="evidence" value="ECO:0007669"/>
    <property type="project" value="UniProtKB-SubCell"/>
</dbReference>
<dbReference type="GO" id="GO:0020002">
    <property type="term" value="C:host cell plasma membrane"/>
    <property type="evidence" value="ECO:0007669"/>
    <property type="project" value="UniProtKB-SubCell"/>
</dbReference>
<dbReference type="GO" id="GO:0044168">
    <property type="term" value="C:host cell rough endoplasmic reticulum"/>
    <property type="evidence" value="ECO:0007669"/>
    <property type="project" value="UniProtKB-SubCell"/>
</dbReference>
<dbReference type="GO" id="GO:0044163">
    <property type="term" value="C:host cytoskeleton"/>
    <property type="evidence" value="ECO:0007669"/>
    <property type="project" value="UniProtKB-SubCell"/>
</dbReference>
<dbReference type="GO" id="GO:0016020">
    <property type="term" value="C:membrane"/>
    <property type="evidence" value="ECO:0007669"/>
    <property type="project" value="UniProtKB-KW"/>
</dbReference>
<dbReference type="GO" id="GO:0039624">
    <property type="term" value="C:viral outer capsid"/>
    <property type="evidence" value="ECO:0007669"/>
    <property type="project" value="UniProtKB-UniRule"/>
</dbReference>
<dbReference type="GO" id="GO:0039665">
    <property type="term" value="P:permeabilization of host organelle membrane involved in viral entry into host cell"/>
    <property type="evidence" value="ECO:0007669"/>
    <property type="project" value="UniProtKB-UniRule"/>
</dbReference>
<dbReference type="GO" id="GO:0019062">
    <property type="term" value="P:virion attachment to host cell"/>
    <property type="evidence" value="ECO:0007669"/>
    <property type="project" value="UniProtKB-UniRule"/>
</dbReference>
<dbReference type="Gene3D" id="1.20.5.170">
    <property type="match status" value="1"/>
</dbReference>
<dbReference type="Gene3D" id="2.60.120.200">
    <property type="match status" value="1"/>
</dbReference>
<dbReference type="HAMAP" id="MF_04132">
    <property type="entry name" value="Rota_A_VP4"/>
    <property type="match status" value="1"/>
</dbReference>
<dbReference type="HAMAP" id="MF_04125">
    <property type="entry name" value="Rota_VP4"/>
    <property type="match status" value="1"/>
</dbReference>
<dbReference type="InterPro" id="IPR013320">
    <property type="entry name" value="ConA-like_dom_sf"/>
</dbReference>
<dbReference type="InterPro" id="IPR042546">
    <property type="entry name" value="Rota_A_VP4"/>
</dbReference>
<dbReference type="InterPro" id="IPR035330">
    <property type="entry name" value="Rota_VP4_MID"/>
</dbReference>
<dbReference type="InterPro" id="IPR038017">
    <property type="entry name" value="Rota_VP4_MID_sf"/>
</dbReference>
<dbReference type="InterPro" id="IPR000416">
    <property type="entry name" value="VP4_concanavalin-like"/>
</dbReference>
<dbReference type="InterPro" id="IPR035329">
    <property type="entry name" value="VP4_helical"/>
</dbReference>
<dbReference type="Pfam" id="PF17477">
    <property type="entry name" value="Rota_VP4_MID"/>
    <property type="match status" value="1"/>
</dbReference>
<dbReference type="Pfam" id="PF00426">
    <property type="entry name" value="VP4_haemagglut"/>
    <property type="match status" value="1"/>
</dbReference>
<dbReference type="Pfam" id="PF17478">
    <property type="entry name" value="VP4_helical"/>
    <property type="match status" value="1"/>
</dbReference>
<dbReference type="SUPFAM" id="SSF49899">
    <property type="entry name" value="Concanavalin A-like lectins/glucanases"/>
    <property type="match status" value="1"/>
</dbReference>
<dbReference type="SUPFAM" id="SSF111379">
    <property type="entry name" value="VP4 membrane interaction domain"/>
    <property type="match status" value="1"/>
</dbReference>
<evidence type="ECO:0000255" key="1">
    <source>
        <dbReference type="HAMAP-Rule" id="MF_04132"/>
    </source>
</evidence>